<organism>
    <name type="scientific">Saccharomyces cerevisiae (strain YJM789)</name>
    <name type="common">Baker's yeast</name>
    <dbReference type="NCBI Taxonomy" id="307796"/>
    <lineage>
        <taxon>Eukaryota</taxon>
        <taxon>Fungi</taxon>
        <taxon>Dikarya</taxon>
        <taxon>Ascomycota</taxon>
        <taxon>Saccharomycotina</taxon>
        <taxon>Saccharomycetes</taxon>
        <taxon>Saccharomycetales</taxon>
        <taxon>Saccharomycetaceae</taxon>
        <taxon>Saccharomyces</taxon>
    </lineage>
</organism>
<protein>
    <recommendedName>
        <fullName>Autophagy-related protein 22</fullName>
    </recommendedName>
</protein>
<accession>A6ZTF2</accession>
<sequence length="528" mass="58816">MSYGTINDMNESVTNYRIKKAQNNIKGWYAYSFSSEPFVVSAVSTYIPLLLQQFASINGVKVHDHSIPCLSETGSDSDKCVLGLFNNRIFVDTSSFALYVFSLSVLFQTIIVISVSGIVDLWGSVKFKGRILVWFGIVGALSTVAISKLNDTQIYSLAGLYIVANGCFGVINVVGNSLLPIFVKDSLKCQSQGAYEPDKVDSLTTVISGRGASLGYSSALIVQIVSMFLVASKKGSKQDVQVAVLFVGIWWFVWQLPMIWLIDDVTIPIRADDSTLASARSPYPGEQDALGQLNWKNYLSYGWVSLFESFKHARLLKDVMIFLIAWFIISDSITTINSTAVLFSKAELHMSTLNLIMISVLTVVNAMLGAFMIPQFLATKFRWTSSQTLMYIIIWASFIPFYGILGFFFNAFGLKHKFEMFLLAIWYGLSLGGLSAVSRSVFSLIVPPGKESTFFSMFSITDKGSSILGPFLVGLLTDKTHNIRYSFYFFFLLLMLSLPVLNCLDVKRGRREAEELSQVLPESERRLD</sequence>
<feature type="chain" id="PRO_0000318036" description="Autophagy-related protein 22">
    <location>
        <begin position="1"/>
        <end position="528"/>
    </location>
</feature>
<feature type="topological domain" description="Cytoplasmic" evidence="1">
    <location>
        <begin position="1"/>
        <end position="98"/>
    </location>
</feature>
<feature type="transmembrane region" description="Helical" evidence="3">
    <location>
        <begin position="99"/>
        <end position="119"/>
    </location>
</feature>
<feature type="topological domain" description="Vacuolar" evidence="1">
    <location>
        <begin position="120"/>
        <end position="130"/>
    </location>
</feature>
<feature type="transmembrane region" description="Helical" evidence="3">
    <location>
        <begin position="131"/>
        <end position="151"/>
    </location>
</feature>
<feature type="topological domain" description="Cytoplasmic" evidence="1">
    <location>
        <begin position="152"/>
        <end position="153"/>
    </location>
</feature>
<feature type="transmembrane region" description="Helical" evidence="3">
    <location>
        <begin position="154"/>
        <end position="174"/>
    </location>
</feature>
<feature type="topological domain" description="Vacuolar" evidence="1">
    <location>
        <begin position="175"/>
        <end position="210"/>
    </location>
</feature>
<feature type="transmembrane region" description="Helical" evidence="3">
    <location>
        <begin position="211"/>
        <end position="231"/>
    </location>
</feature>
<feature type="topological domain" description="Cytoplasmic" evidence="1">
    <location>
        <begin position="232"/>
        <end position="241"/>
    </location>
</feature>
<feature type="transmembrane region" description="Helical" evidence="3">
    <location>
        <begin position="242"/>
        <end position="262"/>
    </location>
</feature>
<feature type="topological domain" description="Vacuolar" evidence="1">
    <location>
        <begin position="263"/>
        <end position="318"/>
    </location>
</feature>
<feature type="transmembrane region" description="Helical" evidence="3">
    <location>
        <begin position="319"/>
        <end position="339"/>
    </location>
</feature>
<feature type="topological domain" description="Cytoplasmic" evidence="1">
    <location>
        <begin position="340"/>
        <end position="352"/>
    </location>
</feature>
<feature type="transmembrane region" description="Helical" evidence="3">
    <location>
        <begin position="353"/>
        <end position="373"/>
    </location>
</feature>
<feature type="topological domain" description="Vacuolar" evidence="1">
    <location>
        <begin position="374"/>
        <end position="388"/>
    </location>
</feature>
<feature type="transmembrane region" description="Helical" evidence="3">
    <location>
        <begin position="389"/>
        <end position="409"/>
    </location>
</feature>
<feature type="topological domain" description="Cytoplasmic" evidence="1">
    <location>
        <begin position="410"/>
        <end position="417"/>
    </location>
</feature>
<feature type="transmembrane region" description="Helical" evidence="3">
    <location>
        <begin position="418"/>
        <end position="438"/>
    </location>
</feature>
<feature type="topological domain" description="Vacuolar" evidence="1">
    <location>
        <begin position="439"/>
        <end position="485"/>
    </location>
</feature>
<feature type="transmembrane region" description="Helical" evidence="3">
    <location>
        <begin position="486"/>
        <end position="506"/>
    </location>
</feature>
<feature type="topological domain" description="Cytoplasmic" evidence="1">
    <location>
        <begin position="507"/>
        <end position="528"/>
    </location>
</feature>
<feature type="modified residue" description="Phosphoserine" evidence="2">
    <location>
        <position position="278"/>
    </location>
</feature>
<gene>
    <name type="primary">ATG22</name>
    <name type="synonym">AUT4</name>
    <name type="ORF">SCY_0545</name>
</gene>
<dbReference type="EMBL" id="AAFW02000089">
    <property type="protein sequence ID" value="EDN62091.1"/>
    <property type="molecule type" value="Genomic_DNA"/>
</dbReference>
<dbReference type="HOGENOM" id="CLU_017518_1_0_1"/>
<dbReference type="Proteomes" id="UP000007060">
    <property type="component" value="Unassembled WGS sequence"/>
</dbReference>
<dbReference type="GO" id="GO:0005774">
    <property type="term" value="C:vacuolar membrane"/>
    <property type="evidence" value="ECO:0007669"/>
    <property type="project" value="UniProtKB-SubCell"/>
</dbReference>
<dbReference type="GO" id="GO:0032974">
    <property type="term" value="P:amino acid transmembrane export from vacuole"/>
    <property type="evidence" value="ECO:0007669"/>
    <property type="project" value="InterPro"/>
</dbReference>
<dbReference type="GO" id="GO:0006914">
    <property type="term" value="P:autophagy"/>
    <property type="evidence" value="ECO:0007669"/>
    <property type="project" value="UniProtKB-KW"/>
</dbReference>
<dbReference type="CDD" id="cd17483">
    <property type="entry name" value="MFS_Atg22_like"/>
    <property type="match status" value="1"/>
</dbReference>
<dbReference type="FunFam" id="1.20.1250.20:FF:001085">
    <property type="entry name" value="Autophagy-related protein 22"/>
    <property type="match status" value="1"/>
</dbReference>
<dbReference type="Gene3D" id="1.20.1250.20">
    <property type="entry name" value="MFS general substrate transporter like domains"/>
    <property type="match status" value="1"/>
</dbReference>
<dbReference type="InterPro" id="IPR044738">
    <property type="entry name" value="Atg22"/>
</dbReference>
<dbReference type="InterPro" id="IPR024671">
    <property type="entry name" value="Atg22-like"/>
</dbReference>
<dbReference type="InterPro" id="IPR050495">
    <property type="entry name" value="ATG22/LtaA_families"/>
</dbReference>
<dbReference type="InterPro" id="IPR036259">
    <property type="entry name" value="MFS_trans_sf"/>
</dbReference>
<dbReference type="PANTHER" id="PTHR23519">
    <property type="entry name" value="AUTOPHAGY-RELATED PROTEIN 22"/>
    <property type="match status" value="1"/>
</dbReference>
<dbReference type="PANTHER" id="PTHR23519:SF1">
    <property type="entry name" value="AUTOPHAGY-RELATED PROTEIN 22"/>
    <property type="match status" value="1"/>
</dbReference>
<dbReference type="Pfam" id="PF11700">
    <property type="entry name" value="ATG22"/>
    <property type="match status" value="1"/>
</dbReference>
<dbReference type="SUPFAM" id="SSF103473">
    <property type="entry name" value="MFS general substrate transporter"/>
    <property type="match status" value="1"/>
</dbReference>
<name>ATG22_YEAS7</name>
<evidence type="ECO:0000250" key="1"/>
<evidence type="ECO:0000250" key="2">
    <source>
        <dbReference type="UniProtKB" id="P25568"/>
    </source>
</evidence>
<evidence type="ECO:0000255" key="3"/>
<evidence type="ECO:0000305" key="4"/>
<keyword id="KW-0029">Amino-acid transport</keyword>
<keyword id="KW-0072">Autophagy</keyword>
<keyword id="KW-0472">Membrane</keyword>
<keyword id="KW-0597">Phosphoprotein</keyword>
<keyword id="KW-0812">Transmembrane</keyword>
<keyword id="KW-1133">Transmembrane helix</keyword>
<keyword id="KW-0813">Transport</keyword>
<keyword id="KW-0926">Vacuole</keyword>
<reference key="1">
    <citation type="journal article" date="2007" name="Proc. Natl. Acad. Sci. U.S.A.">
        <title>Genome sequencing and comparative analysis of Saccharomyces cerevisiae strain YJM789.</title>
        <authorList>
            <person name="Wei W."/>
            <person name="McCusker J.H."/>
            <person name="Hyman R.W."/>
            <person name="Jones T."/>
            <person name="Ning Y."/>
            <person name="Cao Z."/>
            <person name="Gu Z."/>
            <person name="Bruno D."/>
            <person name="Miranda M."/>
            <person name="Nguyen M."/>
            <person name="Wilhelmy J."/>
            <person name="Komp C."/>
            <person name="Tamse R."/>
            <person name="Wang X."/>
            <person name="Jia P."/>
            <person name="Luedi P."/>
            <person name="Oefner P.J."/>
            <person name="David L."/>
            <person name="Dietrich F.S."/>
            <person name="Li Y."/>
            <person name="Davis R.W."/>
            <person name="Steinmetz L.M."/>
        </authorList>
    </citation>
    <scope>NUCLEOTIDE SEQUENCE [LARGE SCALE GENOMIC DNA]</scope>
    <source>
        <strain>YJM789</strain>
    </source>
</reference>
<comment type="function">
    <text evidence="1">Vacuolar effluxer which mediate the efflux of amino acids resulting from autophagic degradation. The release of autophagic amino acids allows the maintenance of protein synthesis and viability during nitrogen starvation (By similarity).</text>
</comment>
<comment type="subcellular location">
    <subcellularLocation>
        <location evidence="1">Vacuole membrane</location>
        <topology evidence="1">Multi-pass membrane protein</topology>
    </subcellularLocation>
    <text evidence="1">Vacuole and punctate structures.</text>
</comment>
<comment type="similarity">
    <text evidence="4">Belongs to the ATG22 family.</text>
</comment>
<proteinExistence type="inferred from homology"/>